<evidence type="ECO:0000255" key="1">
    <source>
        <dbReference type="HAMAP-Rule" id="MF_01445"/>
    </source>
</evidence>
<proteinExistence type="inferred from homology"/>
<dbReference type="EC" id="2.3.1.234" evidence="1"/>
<dbReference type="EMBL" id="CP000284">
    <property type="protein sequence ID" value="ABE50593.1"/>
    <property type="molecule type" value="Genomic_DNA"/>
</dbReference>
<dbReference type="RefSeq" id="WP_011480546.1">
    <property type="nucleotide sequence ID" value="NC_007947.1"/>
</dbReference>
<dbReference type="SMR" id="Q1GYU4"/>
<dbReference type="STRING" id="265072.Mfla_2326"/>
<dbReference type="KEGG" id="mfa:Mfla_2326"/>
<dbReference type="eggNOG" id="COG0533">
    <property type="taxonomic scope" value="Bacteria"/>
</dbReference>
<dbReference type="HOGENOM" id="CLU_023208_0_0_4"/>
<dbReference type="OrthoDB" id="9806197at2"/>
<dbReference type="Proteomes" id="UP000002440">
    <property type="component" value="Chromosome"/>
</dbReference>
<dbReference type="GO" id="GO:0005737">
    <property type="term" value="C:cytoplasm"/>
    <property type="evidence" value="ECO:0007669"/>
    <property type="project" value="UniProtKB-SubCell"/>
</dbReference>
<dbReference type="GO" id="GO:0005506">
    <property type="term" value="F:iron ion binding"/>
    <property type="evidence" value="ECO:0007669"/>
    <property type="project" value="UniProtKB-UniRule"/>
</dbReference>
<dbReference type="GO" id="GO:0061711">
    <property type="term" value="F:N(6)-L-threonylcarbamoyladenine synthase activity"/>
    <property type="evidence" value="ECO:0007669"/>
    <property type="project" value="UniProtKB-EC"/>
</dbReference>
<dbReference type="GO" id="GO:0002949">
    <property type="term" value="P:tRNA threonylcarbamoyladenosine modification"/>
    <property type="evidence" value="ECO:0007669"/>
    <property type="project" value="UniProtKB-UniRule"/>
</dbReference>
<dbReference type="CDD" id="cd24133">
    <property type="entry name" value="ASKHA_NBD_TsaD_bac"/>
    <property type="match status" value="1"/>
</dbReference>
<dbReference type="FunFam" id="3.30.420.40:FF:000012">
    <property type="entry name" value="tRNA N6-adenosine threonylcarbamoyltransferase"/>
    <property type="match status" value="1"/>
</dbReference>
<dbReference type="FunFam" id="3.30.420.40:FF:000040">
    <property type="entry name" value="tRNA N6-adenosine threonylcarbamoyltransferase"/>
    <property type="match status" value="1"/>
</dbReference>
<dbReference type="Gene3D" id="3.30.420.40">
    <property type="match status" value="2"/>
</dbReference>
<dbReference type="HAMAP" id="MF_01445">
    <property type="entry name" value="TsaD"/>
    <property type="match status" value="1"/>
</dbReference>
<dbReference type="InterPro" id="IPR043129">
    <property type="entry name" value="ATPase_NBD"/>
</dbReference>
<dbReference type="InterPro" id="IPR000905">
    <property type="entry name" value="Gcp-like_dom"/>
</dbReference>
<dbReference type="InterPro" id="IPR017861">
    <property type="entry name" value="KAE1/TsaD"/>
</dbReference>
<dbReference type="InterPro" id="IPR022450">
    <property type="entry name" value="TsaD"/>
</dbReference>
<dbReference type="NCBIfam" id="TIGR00329">
    <property type="entry name" value="gcp_kae1"/>
    <property type="match status" value="1"/>
</dbReference>
<dbReference type="NCBIfam" id="TIGR03723">
    <property type="entry name" value="T6A_TsaD_YgjD"/>
    <property type="match status" value="1"/>
</dbReference>
<dbReference type="PANTHER" id="PTHR11735">
    <property type="entry name" value="TRNA N6-ADENOSINE THREONYLCARBAMOYLTRANSFERASE"/>
    <property type="match status" value="1"/>
</dbReference>
<dbReference type="PANTHER" id="PTHR11735:SF6">
    <property type="entry name" value="TRNA N6-ADENOSINE THREONYLCARBAMOYLTRANSFERASE, MITOCHONDRIAL"/>
    <property type="match status" value="1"/>
</dbReference>
<dbReference type="Pfam" id="PF00814">
    <property type="entry name" value="TsaD"/>
    <property type="match status" value="1"/>
</dbReference>
<dbReference type="PRINTS" id="PR00789">
    <property type="entry name" value="OSIALOPTASE"/>
</dbReference>
<dbReference type="SUPFAM" id="SSF53067">
    <property type="entry name" value="Actin-like ATPase domain"/>
    <property type="match status" value="2"/>
</dbReference>
<feature type="chain" id="PRO_0000303424" description="tRNA N6-adenosine threonylcarbamoyltransferase">
    <location>
        <begin position="1"/>
        <end position="339"/>
    </location>
</feature>
<feature type="binding site" evidence="1">
    <location>
        <position position="111"/>
    </location>
    <ligand>
        <name>Fe cation</name>
        <dbReference type="ChEBI" id="CHEBI:24875"/>
    </ligand>
</feature>
<feature type="binding site" evidence="1">
    <location>
        <position position="115"/>
    </location>
    <ligand>
        <name>Fe cation</name>
        <dbReference type="ChEBI" id="CHEBI:24875"/>
    </ligand>
</feature>
<feature type="binding site" evidence="1">
    <location>
        <begin position="134"/>
        <end position="138"/>
    </location>
    <ligand>
        <name>substrate</name>
    </ligand>
</feature>
<feature type="binding site" evidence="1">
    <location>
        <position position="167"/>
    </location>
    <ligand>
        <name>substrate</name>
    </ligand>
</feature>
<feature type="binding site" evidence="1">
    <location>
        <position position="180"/>
    </location>
    <ligand>
        <name>substrate</name>
    </ligand>
</feature>
<feature type="binding site" evidence="1">
    <location>
        <position position="274"/>
    </location>
    <ligand>
        <name>substrate</name>
    </ligand>
</feature>
<feature type="binding site" evidence="1">
    <location>
        <position position="302"/>
    </location>
    <ligand>
        <name>Fe cation</name>
        <dbReference type="ChEBI" id="CHEBI:24875"/>
    </ligand>
</feature>
<organism>
    <name type="scientific">Methylobacillus flagellatus (strain ATCC 51484 / DSM 6875 / VKM B-1610 / KT)</name>
    <dbReference type="NCBI Taxonomy" id="265072"/>
    <lineage>
        <taxon>Bacteria</taxon>
        <taxon>Pseudomonadati</taxon>
        <taxon>Pseudomonadota</taxon>
        <taxon>Betaproteobacteria</taxon>
        <taxon>Nitrosomonadales</taxon>
        <taxon>Methylophilaceae</taxon>
        <taxon>Methylobacillus</taxon>
    </lineage>
</organism>
<reference key="1">
    <citation type="submission" date="2006-03" db="EMBL/GenBank/DDBJ databases">
        <title>Complete sequence of Methylobacillus flagellatus KT.</title>
        <authorList>
            <consortium name="US DOE Joint Genome Institute"/>
            <person name="Copeland A."/>
            <person name="Lucas S."/>
            <person name="Lapidus A."/>
            <person name="Barry K."/>
            <person name="Detter J.C."/>
            <person name="Glavina del Rio T."/>
            <person name="Hammon N."/>
            <person name="Israni S."/>
            <person name="Dalin E."/>
            <person name="Tice H."/>
            <person name="Pitluck S."/>
            <person name="Brettin T."/>
            <person name="Bruce D."/>
            <person name="Han C."/>
            <person name="Tapia R."/>
            <person name="Saunders E."/>
            <person name="Gilna P."/>
            <person name="Schmutz J."/>
            <person name="Larimer F."/>
            <person name="Land M."/>
            <person name="Kyrpides N."/>
            <person name="Anderson I."/>
            <person name="Richardson P."/>
        </authorList>
    </citation>
    <scope>NUCLEOTIDE SEQUENCE [LARGE SCALE GENOMIC DNA]</scope>
    <source>
        <strain>ATCC 51484 / DSM 6875 / VKM B-1610 / KT</strain>
    </source>
</reference>
<keyword id="KW-0012">Acyltransferase</keyword>
<keyword id="KW-0963">Cytoplasm</keyword>
<keyword id="KW-0408">Iron</keyword>
<keyword id="KW-0479">Metal-binding</keyword>
<keyword id="KW-1185">Reference proteome</keyword>
<keyword id="KW-0808">Transferase</keyword>
<keyword id="KW-0819">tRNA processing</keyword>
<name>TSAD_METFK</name>
<gene>
    <name evidence="1" type="primary">tsaD</name>
    <name type="synonym">gcp</name>
    <name type="ordered locus">Mfla_2326</name>
</gene>
<protein>
    <recommendedName>
        <fullName evidence="1">tRNA N6-adenosine threonylcarbamoyltransferase</fullName>
        <ecNumber evidence="1">2.3.1.234</ecNumber>
    </recommendedName>
    <alternativeName>
        <fullName evidence="1">N6-L-threonylcarbamoyladenine synthase</fullName>
        <shortName evidence="1">t(6)A synthase</shortName>
    </alternativeName>
    <alternativeName>
        <fullName evidence="1">t(6)A37 threonylcarbamoyladenosine biosynthesis protein TsaD</fullName>
    </alternativeName>
    <alternativeName>
        <fullName evidence="1">tRNA threonylcarbamoyladenosine biosynthesis protein TsaD</fullName>
    </alternativeName>
</protein>
<accession>Q1GYU4</accession>
<comment type="function">
    <text evidence="1">Required for the formation of a threonylcarbamoyl group on adenosine at position 37 (t(6)A37) in tRNAs that read codons beginning with adenine. Is involved in the transfer of the threonylcarbamoyl moiety of threonylcarbamoyl-AMP (TC-AMP) to the N6 group of A37, together with TsaE and TsaB. TsaD likely plays a direct catalytic role in this reaction.</text>
</comment>
<comment type="catalytic activity">
    <reaction evidence="1">
        <text>L-threonylcarbamoyladenylate + adenosine(37) in tRNA = N(6)-L-threonylcarbamoyladenosine(37) in tRNA + AMP + H(+)</text>
        <dbReference type="Rhea" id="RHEA:37059"/>
        <dbReference type="Rhea" id="RHEA-COMP:10162"/>
        <dbReference type="Rhea" id="RHEA-COMP:10163"/>
        <dbReference type="ChEBI" id="CHEBI:15378"/>
        <dbReference type="ChEBI" id="CHEBI:73682"/>
        <dbReference type="ChEBI" id="CHEBI:74411"/>
        <dbReference type="ChEBI" id="CHEBI:74418"/>
        <dbReference type="ChEBI" id="CHEBI:456215"/>
        <dbReference type="EC" id="2.3.1.234"/>
    </reaction>
</comment>
<comment type="cofactor">
    <cofactor evidence="1">
        <name>Fe(2+)</name>
        <dbReference type="ChEBI" id="CHEBI:29033"/>
    </cofactor>
    <text evidence="1">Binds 1 Fe(2+) ion per subunit.</text>
</comment>
<comment type="subcellular location">
    <subcellularLocation>
        <location evidence="1">Cytoplasm</location>
    </subcellularLocation>
</comment>
<comment type="similarity">
    <text evidence="1">Belongs to the KAE1 / TsaD family.</text>
</comment>
<sequence>MLILGIESSCDETGLALYDTERGLLAHALHSQIDMHAAYGGVVPELASRDHIRRTLPLTQHVLEQAGKSLADLDGIAYTQGPGLSGALLVGTSIAESLAFSLDLPTIGVHHLEGHLLAPLLEPDPPAFPFVALLVSGGHTQLMRVSAIGDYELLGDTLDDAAGEAFDKTAKLLGLSYPGGPAVSRLANQGQPGACQLPRPMLNSGDLNFSFSGLKTAVLTLVNQYGDALDETARANIAYEFQEAVTEVLTKKCMAALRNTGLNQLIVSGGVGANARLRERLNMAAKRRQYQVHYPRLEFCTDNGAMIAFAGAMRMQHAKQGNHSFTVRPRWDLAELNKP</sequence>